<reference evidence="3" key="1">
    <citation type="journal article" date="2018" name="Probiotics Antimicrob. Proteins">
        <title>Isolation, Identification of Lactobacillus mucosae AN1 and its Antilisterial Peptide Purification and Characterization.</title>
        <authorList>
            <person name="Repally A."/>
            <person name="Perumal V."/>
            <person name="Dasari A."/>
            <person name="Palanichamy E."/>
            <person name="Venkatesan A."/>
        </authorList>
    </citation>
    <scope>PROTEIN SEQUENCE</scope>
    <scope>FUNCTION</scope>
    <scope>ACTIVITY REGULATION</scope>
    <scope>BIOPHYSICOCHEMICAL PROPERTIES</scope>
    <scope>SUBCELLULAR LOCATION</scope>
    <scope>MASS SPECTROMETRY</scope>
    <source>
        <strain evidence="2">AN1</strain>
    </source>
</reference>
<comment type="function">
    <text evidence="1">Has antibacterial activity against L.monocytogenes.</text>
</comment>
<comment type="activity regulation">
    <text evidence="1">Antimicrobial activity was completely lost after treatment with proteinase k, or high concentrations of chymotrypsin, trypsin or pepsin (PubMed:29064056). Also inhibited by isopropanol, methanol, acetonitrile and chloroform (PubMed:29064056). There was no significant loss of activity with either lipase, peroxidase, or amylase (PubMed:29064056).</text>
</comment>
<comment type="biophysicochemical properties">
    <phDependence>
        <text evidence="1">Optimum pH is about 6. Activity decreases sharply with increasing alkalinity.</text>
    </phDependence>
    <temperatureDependence>
        <text evidence="1">Optimum temperature is 30 degrees Celsius. Active from 30 to 100 degrees Celsius.</text>
    </temperatureDependence>
</comment>
<comment type="subcellular location">
    <subcellularLocation>
        <location evidence="1">Secreted</location>
    </subcellularLocation>
</comment>
<comment type="mass spectrometry" mass="10668.0" method="MALDI" evidence="1"/>
<protein>
    <recommendedName>
        <fullName evidence="4">Antibacterial peptide AN1</fullName>
    </recommendedName>
    <alternativeName>
        <fullName evidence="2">Bacteriocin AN1</fullName>
    </alternativeName>
</protein>
<dbReference type="GO" id="GO:0005576">
    <property type="term" value="C:extracellular region"/>
    <property type="evidence" value="ECO:0007669"/>
    <property type="project" value="UniProtKB-SubCell"/>
</dbReference>
<dbReference type="GO" id="GO:0050830">
    <property type="term" value="P:defense response to Gram-positive bacterium"/>
    <property type="evidence" value="ECO:0000314"/>
    <property type="project" value="UniProtKB"/>
</dbReference>
<dbReference type="GO" id="GO:1900426">
    <property type="term" value="P:positive regulation of defense response to bacterium"/>
    <property type="evidence" value="ECO:0000314"/>
    <property type="project" value="UniProtKB"/>
</dbReference>
<proteinExistence type="evidence at protein level"/>
<evidence type="ECO:0000269" key="1">
    <source>
    </source>
</evidence>
<evidence type="ECO:0000303" key="2">
    <source>
    </source>
</evidence>
<evidence type="ECO:0000305" key="3"/>
<evidence type="ECO:0000305" key="4">
    <source>
    </source>
</evidence>
<sequence length="11" mass="1248">LVALDTEFANR</sequence>
<feature type="peptide" id="PRO_0000454660" description="Antibacterial peptide AN1">
    <location>
        <begin position="1"/>
        <end position="11"/>
    </location>
</feature>
<feature type="non-terminal residue" evidence="2">
    <location>
        <position position="11"/>
    </location>
</feature>
<name>ABAN1_LIMMU</name>
<accession>C0HL60</accession>
<organism>
    <name type="scientific">Limosilactobacillus mucosae</name>
    <name type="common">Lactobacillus mucosae</name>
    <dbReference type="NCBI Taxonomy" id="97478"/>
    <lineage>
        <taxon>Bacteria</taxon>
        <taxon>Bacillati</taxon>
        <taxon>Bacillota</taxon>
        <taxon>Bacilli</taxon>
        <taxon>Lactobacillales</taxon>
        <taxon>Lactobacillaceae</taxon>
        <taxon>Limosilactobacillus</taxon>
    </lineage>
</organism>
<keyword id="KW-0044">Antibiotic</keyword>
<keyword id="KW-0929">Antimicrobial</keyword>
<keyword id="KW-0903">Direct protein sequencing</keyword>
<keyword id="KW-0964">Secreted</keyword>